<protein>
    <recommendedName>
        <fullName evidence="1">Small ribosomal subunit protein uS13</fullName>
    </recommendedName>
    <alternativeName>
        <fullName evidence="3">30S ribosomal protein S13</fullName>
    </alternativeName>
</protein>
<reference key="1">
    <citation type="journal article" date="2007" name="ISME J.">
        <title>Population level functional diversity in a microbial community revealed by comparative genomic and metagenomic analyses.</title>
        <authorList>
            <person name="Bhaya D."/>
            <person name="Grossman A.R."/>
            <person name="Steunou A.-S."/>
            <person name="Khuri N."/>
            <person name="Cohan F.M."/>
            <person name="Hamamura N."/>
            <person name="Melendrez M.C."/>
            <person name="Bateson M.M."/>
            <person name="Ward D.M."/>
            <person name="Heidelberg J.F."/>
        </authorList>
    </citation>
    <scope>NUCLEOTIDE SEQUENCE [LARGE SCALE GENOMIC DNA]</scope>
    <source>
        <strain>JA-3-3Ab</strain>
    </source>
</reference>
<dbReference type="EMBL" id="CP000239">
    <property type="protein sequence ID" value="ABC99621.1"/>
    <property type="molecule type" value="Genomic_DNA"/>
</dbReference>
<dbReference type="RefSeq" id="WP_011430299.1">
    <property type="nucleotide sequence ID" value="NC_007775.1"/>
</dbReference>
<dbReference type="SMR" id="Q2JUJ3"/>
<dbReference type="STRING" id="321327.CYA_1453"/>
<dbReference type="KEGG" id="cya:CYA_1453"/>
<dbReference type="eggNOG" id="COG0099">
    <property type="taxonomic scope" value="Bacteria"/>
</dbReference>
<dbReference type="HOGENOM" id="CLU_103849_1_2_3"/>
<dbReference type="OrthoDB" id="9803610at2"/>
<dbReference type="Proteomes" id="UP000008818">
    <property type="component" value="Chromosome"/>
</dbReference>
<dbReference type="GO" id="GO:0005829">
    <property type="term" value="C:cytosol"/>
    <property type="evidence" value="ECO:0007669"/>
    <property type="project" value="TreeGrafter"/>
</dbReference>
<dbReference type="GO" id="GO:0015935">
    <property type="term" value="C:small ribosomal subunit"/>
    <property type="evidence" value="ECO:0007669"/>
    <property type="project" value="TreeGrafter"/>
</dbReference>
<dbReference type="GO" id="GO:0019843">
    <property type="term" value="F:rRNA binding"/>
    <property type="evidence" value="ECO:0007669"/>
    <property type="project" value="UniProtKB-UniRule"/>
</dbReference>
<dbReference type="GO" id="GO:0003735">
    <property type="term" value="F:structural constituent of ribosome"/>
    <property type="evidence" value="ECO:0007669"/>
    <property type="project" value="InterPro"/>
</dbReference>
<dbReference type="GO" id="GO:0000049">
    <property type="term" value="F:tRNA binding"/>
    <property type="evidence" value="ECO:0007669"/>
    <property type="project" value="UniProtKB-UniRule"/>
</dbReference>
<dbReference type="GO" id="GO:0006412">
    <property type="term" value="P:translation"/>
    <property type="evidence" value="ECO:0007669"/>
    <property type="project" value="UniProtKB-UniRule"/>
</dbReference>
<dbReference type="FunFam" id="1.10.8.50:FF:000001">
    <property type="entry name" value="30S ribosomal protein S13"/>
    <property type="match status" value="1"/>
</dbReference>
<dbReference type="FunFam" id="4.10.910.10:FF:000001">
    <property type="entry name" value="30S ribosomal protein S13"/>
    <property type="match status" value="1"/>
</dbReference>
<dbReference type="Gene3D" id="1.10.8.50">
    <property type="match status" value="1"/>
</dbReference>
<dbReference type="Gene3D" id="4.10.910.10">
    <property type="entry name" value="30s ribosomal protein s13, domain 2"/>
    <property type="match status" value="1"/>
</dbReference>
<dbReference type="HAMAP" id="MF_01315">
    <property type="entry name" value="Ribosomal_uS13"/>
    <property type="match status" value="1"/>
</dbReference>
<dbReference type="InterPro" id="IPR027437">
    <property type="entry name" value="Rbsml_uS13_C"/>
</dbReference>
<dbReference type="InterPro" id="IPR001892">
    <property type="entry name" value="Ribosomal_uS13"/>
</dbReference>
<dbReference type="InterPro" id="IPR010979">
    <property type="entry name" value="Ribosomal_uS13-like_H2TH"/>
</dbReference>
<dbReference type="InterPro" id="IPR019980">
    <property type="entry name" value="Ribosomal_uS13_bac-type"/>
</dbReference>
<dbReference type="InterPro" id="IPR018269">
    <property type="entry name" value="Ribosomal_uS13_CS"/>
</dbReference>
<dbReference type="NCBIfam" id="TIGR03631">
    <property type="entry name" value="uS13_bact"/>
    <property type="match status" value="1"/>
</dbReference>
<dbReference type="PANTHER" id="PTHR10871">
    <property type="entry name" value="30S RIBOSOMAL PROTEIN S13/40S RIBOSOMAL PROTEIN S18"/>
    <property type="match status" value="1"/>
</dbReference>
<dbReference type="PANTHER" id="PTHR10871:SF1">
    <property type="entry name" value="SMALL RIBOSOMAL SUBUNIT PROTEIN US13M"/>
    <property type="match status" value="1"/>
</dbReference>
<dbReference type="Pfam" id="PF00416">
    <property type="entry name" value="Ribosomal_S13"/>
    <property type="match status" value="1"/>
</dbReference>
<dbReference type="PIRSF" id="PIRSF002134">
    <property type="entry name" value="Ribosomal_S13"/>
    <property type="match status" value="1"/>
</dbReference>
<dbReference type="SUPFAM" id="SSF46946">
    <property type="entry name" value="S13-like H2TH domain"/>
    <property type="match status" value="1"/>
</dbReference>
<dbReference type="PROSITE" id="PS00646">
    <property type="entry name" value="RIBOSOMAL_S13_1"/>
    <property type="match status" value="1"/>
</dbReference>
<dbReference type="PROSITE" id="PS50159">
    <property type="entry name" value="RIBOSOMAL_S13_2"/>
    <property type="match status" value="1"/>
</dbReference>
<name>RS13_SYNJA</name>
<feature type="chain" id="PRO_0000306732" description="Small ribosomal subunit protein uS13">
    <location>
        <begin position="1"/>
        <end position="127"/>
    </location>
</feature>
<feature type="region of interest" description="Disordered" evidence="2">
    <location>
        <begin position="100"/>
        <end position="127"/>
    </location>
</feature>
<feature type="compositionally biased region" description="Basic residues" evidence="2">
    <location>
        <begin position="101"/>
        <end position="127"/>
    </location>
</feature>
<sequence>MARIAGVDIPRDKRVEIALTYIYGIGLTRSRQILAKTGINPDTRTRDLTDAEVAALRAVVEGEYQVEGDLRRQEAMNIKRLIDIGTYRGRRHRLNLPVRGQRTRTNARTRKGVRKTVAGKKKAPAKK</sequence>
<accession>Q2JUJ3</accession>
<evidence type="ECO:0000255" key="1">
    <source>
        <dbReference type="HAMAP-Rule" id="MF_01315"/>
    </source>
</evidence>
<evidence type="ECO:0000256" key="2">
    <source>
        <dbReference type="SAM" id="MobiDB-lite"/>
    </source>
</evidence>
<evidence type="ECO:0000305" key="3"/>
<proteinExistence type="inferred from homology"/>
<keyword id="KW-0687">Ribonucleoprotein</keyword>
<keyword id="KW-0689">Ribosomal protein</keyword>
<keyword id="KW-0694">RNA-binding</keyword>
<keyword id="KW-0699">rRNA-binding</keyword>
<keyword id="KW-0820">tRNA-binding</keyword>
<gene>
    <name evidence="1" type="primary">rpsM</name>
    <name evidence="1" type="synonym">rps13</name>
    <name type="ordered locus">CYA_1453</name>
</gene>
<organism>
    <name type="scientific">Synechococcus sp. (strain JA-3-3Ab)</name>
    <name type="common">Cyanobacteria bacterium Yellowstone A-Prime</name>
    <dbReference type="NCBI Taxonomy" id="321327"/>
    <lineage>
        <taxon>Bacteria</taxon>
        <taxon>Bacillati</taxon>
        <taxon>Cyanobacteriota</taxon>
        <taxon>Cyanophyceae</taxon>
        <taxon>Synechococcales</taxon>
        <taxon>Synechococcaceae</taxon>
        <taxon>Synechococcus</taxon>
    </lineage>
</organism>
<comment type="function">
    <text evidence="1">Located at the top of the head of the 30S subunit, it contacts several helices of the 16S rRNA. In the 70S ribosome it contacts the 23S rRNA (bridge B1a) and protein L5 of the 50S subunit (bridge B1b), connecting the 2 subunits; these bridges are implicated in subunit movement. Contacts the tRNAs in the A and P-sites.</text>
</comment>
<comment type="subunit">
    <text evidence="1">Part of the 30S ribosomal subunit. Forms a loose heterodimer with protein S19. Forms two bridges to the 50S subunit in the 70S ribosome.</text>
</comment>
<comment type="similarity">
    <text evidence="1">Belongs to the universal ribosomal protein uS13 family.</text>
</comment>